<feature type="chain" id="PRO_1000195988" description="Large ribosomal subunit protein bL32">
    <location>
        <begin position="1"/>
        <end position="65"/>
    </location>
</feature>
<sequence length="65" mass="7466">MAVVPKRKTSKQRKALRRSHHALEALTLVECKNCKQSIVPHQACKYCGFYKDKKVIKVALNDQVK</sequence>
<comment type="similarity">
    <text evidence="1">Belongs to the bacterial ribosomal protein bL32 family.</text>
</comment>
<gene>
    <name evidence="1" type="primary">rpmF</name>
    <name type="ordered locus">MARTH_orf408</name>
</gene>
<protein>
    <recommendedName>
        <fullName evidence="1">Large ribosomal subunit protein bL32</fullName>
    </recommendedName>
    <alternativeName>
        <fullName evidence="2">50S ribosomal protein L32</fullName>
    </alternativeName>
</protein>
<dbReference type="EMBL" id="CP001047">
    <property type="protein sequence ID" value="ACF07271.1"/>
    <property type="molecule type" value="Genomic_DNA"/>
</dbReference>
<dbReference type="RefSeq" id="WP_012498228.1">
    <property type="nucleotide sequence ID" value="NC_011025.1"/>
</dbReference>
<dbReference type="SMR" id="B3PML9"/>
<dbReference type="STRING" id="243272.MARTH_orf408"/>
<dbReference type="KEGG" id="mat:MARTH_orf408"/>
<dbReference type="eggNOG" id="COG0333">
    <property type="taxonomic scope" value="Bacteria"/>
</dbReference>
<dbReference type="HOGENOM" id="CLU_129084_1_3_14"/>
<dbReference type="Proteomes" id="UP000008812">
    <property type="component" value="Chromosome"/>
</dbReference>
<dbReference type="GO" id="GO:0015934">
    <property type="term" value="C:large ribosomal subunit"/>
    <property type="evidence" value="ECO:0007669"/>
    <property type="project" value="InterPro"/>
</dbReference>
<dbReference type="GO" id="GO:0003735">
    <property type="term" value="F:structural constituent of ribosome"/>
    <property type="evidence" value="ECO:0007669"/>
    <property type="project" value="InterPro"/>
</dbReference>
<dbReference type="GO" id="GO:0006412">
    <property type="term" value="P:translation"/>
    <property type="evidence" value="ECO:0007669"/>
    <property type="project" value="UniProtKB-UniRule"/>
</dbReference>
<dbReference type="Gene3D" id="1.20.5.640">
    <property type="entry name" value="Single helix bin"/>
    <property type="match status" value="1"/>
</dbReference>
<dbReference type="HAMAP" id="MF_00340">
    <property type="entry name" value="Ribosomal_bL32"/>
    <property type="match status" value="1"/>
</dbReference>
<dbReference type="InterPro" id="IPR002677">
    <property type="entry name" value="Ribosomal_bL32"/>
</dbReference>
<dbReference type="InterPro" id="IPR044957">
    <property type="entry name" value="Ribosomal_bL32_bact"/>
</dbReference>
<dbReference type="InterPro" id="IPR011332">
    <property type="entry name" value="Ribosomal_zn-bd"/>
</dbReference>
<dbReference type="NCBIfam" id="TIGR01031">
    <property type="entry name" value="rpmF_bact"/>
    <property type="match status" value="1"/>
</dbReference>
<dbReference type="PANTHER" id="PTHR35534">
    <property type="entry name" value="50S RIBOSOMAL PROTEIN L32"/>
    <property type="match status" value="1"/>
</dbReference>
<dbReference type="PANTHER" id="PTHR35534:SF1">
    <property type="entry name" value="LARGE RIBOSOMAL SUBUNIT PROTEIN BL32"/>
    <property type="match status" value="1"/>
</dbReference>
<dbReference type="Pfam" id="PF01783">
    <property type="entry name" value="Ribosomal_L32p"/>
    <property type="match status" value="1"/>
</dbReference>
<dbReference type="SUPFAM" id="SSF57829">
    <property type="entry name" value="Zn-binding ribosomal proteins"/>
    <property type="match status" value="1"/>
</dbReference>
<keyword id="KW-1185">Reference proteome</keyword>
<keyword id="KW-0687">Ribonucleoprotein</keyword>
<keyword id="KW-0689">Ribosomal protein</keyword>
<evidence type="ECO:0000255" key="1">
    <source>
        <dbReference type="HAMAP-Rule" id="MF_00340"/>
    </source>
</evidence>
<evidence type="ECO:0000305" key="2"/>
<reference key="1">
    <citation type="journal article" date="2008" name="Infect. Immun.">
        <title>Genome of Mycoplasma arthritidis.</title>
        <authorList>
            <person name="Dybvig K."/>
            <person name="Zuhua C."/>
            <person name="Lao P."/>
            <person name="Jordan D.S."/>
            <person name="French C.T."/>
            <person name="Tu A.H."/>
            <person name="Loraine A.E."/>
        </authorList>
    </citation>
    <scope>NUCLEOTIDE SEQUENCE [LARGE SCALE GENOMIC DNA]</scope>
    <source>
        <strain>158L3-1</strain>
    </source>
</reference>
<organism>
    <name type="scientific">Metamycoplasma arthritidis (strain 158L3-1)</name>
    <name type="common">Mycoplasma arthritidis</name>
    <dbReference type="NCBI Taxonomy" id="243272"/>
    <lineage>
        <taxon>Bacteria</taxon>
        <taxon>Bacillati</taxon>
        <taxon>Mycoplasmatota</taxon>
        <taxon>Mycoplasmoidales</taxon>
        <taxon>Metamycoplasmataceae</taxon>
        <taxon>Metamycoplasma</taxon>
    </lineage>
</organism>
<accession>B3PML9</accession>
<proteinExistence type="inferred from homology"/>
<name>RL32_META1</name>